<name>YOAI_SALTY</name>
<sequence length="35" mass="3804">MYDPPFLEALMITASFFAIFIIIVVSVLLLEGGGD</sequence>
<gene>
    <name type="primary">yoaI</name>
    <name type="ordered locus">STM1281</name>
</gene>
<comment type="subcellular location">
    <subcellularLocation>
        <location evidence="2">Membrane</location>
        <topology evidence="2">Single-pass membrane protein</topology>
    </subcellularLocation>
</comment>
<keyword id="KW-0472">Membrane</keyword>
<keyword id="KW-1185">Reference proteome</keyword>
<keyword id="KW-0812">Transmembrane</keyword>
<keyword id="KW-1133">Transmembrane helix</keyword>
<accession>Q8ZPW6</accession>
<proteinExistence type="predicted"/>
<evidence type="ECO:0000255" key="1"/>
<evidence type="ECO:0000305" key="2"/>
<dbReference type="EMBL" id="AE006468">
    <property type="protein sequence ID" value="AAL20206.1"/>
    <property type="molecule type" value="Genomic_DNA"/>
</dbReference>
<dbReference type="RefSeq" id="NP_460247.1">
    <property type="nucleotide sequence ID" value="NC_003197.2"/>
</dbReference>
<dbReference type="RefSeq" id="WP_000272241.1">
    <property type="nucleotide sequence ID" value="NC_003197.2"/>
</dbReference>
<dbReference type="SMR" id="Q8ZPW6"/>
<dbReference type="PaxDb" id="99287-STM1281"/>
<dbReference type="GeneID" id="1252799"/>
<dbReference type="KEGG" id="stm:STM1281"/>
<dbReference type="PATRIC" id="fig|99287.12.peg.1362"/>
<dbReference type="HOGENOM" id="CLU_216793_0_0_6"/>
<dbReference type="BioCyc" id="SENT99287:STM1281-MONOMER"/>
<dbReference type="Proteomes" id="UP000001014">
    <property type="component" value="Chromosome"/>
</dbReference>
<dbReference type="GO" id="GO:0016020">
    <property type="term" value="C:membrane"/>
    <property type="evidence" value="ECO:0007669"/>
    <property type="project" value="UniProtKB-SubCell"/>
</dbReference>
<dbReference type="InterPro" id="IPR048191">
    <property type="entry name" value="YoaI-like"/>
</dbReference>
<dbReference type="NCBIfam" id="NF041475">
    <property type="entry name" value="membrane_YoaI"/>
    <property type="match status" value="1"/>
</dbReference>
<protein>
    <recommendedName>
        <fullName>Uncharacterized protein YoaI</fullName>
    </recommendedName>
</protein>
<feature type="chain" id="PRO_0000248929" description="Uncharacterized protein YoaI">
    <location>
        <begin position="1"/>
        <end position="35"/>
    </location>
</feature>
<feature type="transmembrane region" description="Helical" evidence="1">
    <location>
        <begin position="10"/>
        <end position="30"/>
    </location>
</feature>
<reference key="1">
    <citation type="journal article" date="2001" name="Nature">
        <title>Complete genome sequence of Salmonella enterica serovar Typhimurium LT2.</title>
        <authorList>
            <person name="McClelland M."/>
            <person name="Sanderson K.E."/>
            <person name="Spieth J."/>
            <person name="Clifton S.W."/>
            <person name="Latreille P."/>
            <person name="Courtney L."/>
            <person name="Porwollik S."/>
            <person name="Ali J."/>
            <person name="Dante M."/>
            <person name="Du F."/>
            <person name="Hou S."/>
            <person name="Layman D."/>
            <person name="Leonard S."/>
            <person name="Nguyen C."/>
            <person name="Scott K."/>
            <person name="Holmes A."/>
            <person name="Grewal N."/>
            <person name="Mulvaney E."/>
            <person name="Ryan E."/>
            <person name="Sun H."/>
            <person name="Florea L."/>
            <person name="Miller W."/>
            <person name="Stoneking T."/>
            <person name="Nhan M."/>
            <person name="Waterston R."/>
            <person name="Wilson R.K."/>
        </authorList>
    </citation>
    <scope>NUCLEOTIDE SEQUENCE [LARGE SCALE GENOMIC DNA]</scope>
    <source>
        <strain>LT2 / SGSC1412 / ATCC 700720</strain>
    </source>
</reference>
<organism>
    <name type="scientific">Salmonella typhimurium (strain LT2 / SGSC1412 / ATCC 700720)</name>
    <dbReference type="NCBI Taxonomy" id="99287"/>
    <lineage>
        <taxon>Bacteria</taxon>
        <taxon>Pseudomonadati</taxon>
        <taxon>Pseudomonadota</taxon>
        <taxon>Gammaproteobacteria</taxon>
        <taxon>Enterobacterales</taxon>
        <taxon>Enterobacteriaceae</taxon>
        <taxon>Salmonella</taxon>
    </lineage>
</organism>